<reference key="1">
    <citation type="submission" date="2008-10" db="EMBL/GenBank/DDBJ databases">
        <title>Genome sequence of Bacillus cereus B4264.</title>
        <authorList>
            <person name="Dodson R.J."/>
            <person name="Durkin A.S."/>
            <person name="Rosovitz M.J."/>
            <person name="Rasko D.A."/>
            <person name="Hoffmaster A."/>
            <person name="Ravel J."/>
            <person name="Sutton G."/>
        </authorList>
    </citation>
    <scope>NUCLEOTIDE SEQUENCE [LARGE SCALE GENOMIC DNA]</scope>
    <source>
        <strain>B4264</strain>
    </source>
</reference>
<accession>B7HDY9</accession>
<comment type="function">
    <text evidence="1">Attaches a formyl group to the free amino group of methionyl-tRNA(fMet). The formyl group appears to play a dual role in the initiator identity of N-formylmethionyl-tRNA by promoting its recognition by IF2 and preventing the misappropriation of this tRNA by the elongation apparatus.</text>
</comment>
<comment type="catalytic activity">
    <reaction evidence="1">
        <text>L-methionyl-tRNA(fMet) + (6R)-10-formyltetrahydrofolate = N-formyl-L-methionyl-tRNA(fMet) + (6S)-5,6,7,8-tetrahydrofolate + H(+)</text>
        <dbReference type="Rhea" id="RHEA:24380"/>
        <dbReference type="Rhea" id="RHEA-COMP:9952"/>
        <dbReference type="Rhea" id="RHEA-COMP:9953"/>
        <dbReference type="ChEBI" id="CHEBI:15378"/>
        <dbReference type="ChEBI" id="CHEBI:57453"/>
        <dbReference type="ChEBI" id="CHEBI:78530"/>
        <dbReference type="ChEBI" id="CHEBI:78844"/>
        <dbReference type="ChEBI" id="CHEBI:195366"/>
        <dbReference type="EC" id="2.1.2.9"/>
    </reaction>
</comment>
<comment type="similarity">
    <text evidence="1">Belongs to the Fmt family.</text>
</comment>
<organism>
    <name type="scientific">Bacillus cereus (strain B4264)</name>
    <dbReference type="NCBI Taxonomy" id="405532"/>
    <lineage>
        <taxon>Bacteria</taxon>
        <taxon>Bacillati</taxon>
        <taxon>Bacillota</taxon>
        <taxon>Bacilli</taxon>
        <taxon>Bacillales</taxon>
        <taxon>Bacillaceae</taxon>
        <taxon>Bacillus</taxon>
        <taxon>Bacillus cereus group</taxon>
    </lineage>
</organism>
<proteinExistence type="inferred from homology"/>
<gene>
    <name evidence="1" type="primary">fmt</name>
    <name type="ordered locus">BCB4264_A3965</name>
</gene>
<keyword id="KW-0648">Protein biosynthesis</keyword>
<keyword id="KW-0808">Transferase</keyword>
<name>FMT_BACC4</name>
<dbReference type="EC" id="2.1.2.9" evidence="1"/>
<dbReference type="EMBL" id="CP001176">
    <property type="protein sequence ID" value="ACK61062.1"/>
    <property type="molecule type" value="Genomic_DNA"/>
</dbReference>
<dbReference type="RefSeq" id="WP_000598804.1">
    <property type="nucleotide sequence ID" value="NZ_VEHB01000002.1"/>
</dbReference>
<dbReference type="SMR" id="B7HDY9"/>
<dbReference type="KEGG" id="bcb:BCB4264_A3965"/>
<dbReference type="HOGENOM" id="CLU_033347_1_1_9"/>
<dbReference type="Proteomes" id="UP000007096">
    <property type="component" value="Chromosome"/>
</dbReference>
<dbReference type="GO" id="GO:0005829">
    <property type="term" value="C:cytosol"/>
    <property type="evidence" value="ECO:0007669"/>
    <property type="project" value="TreeGrafter"/>
</dbReference>
<dbReference type="GO" id="GO:0004479">
    <property type="term" value="F:methionyl-tRNA formyltransferase activity"/>
    <property type="evidence" value="ECO:0007669"/>
    <property type="project" value="UniProtKB-UniRule"/>
</dbReference>
<dbReference type="CDD" id="cd08646">
    <property type="entry name" value="FMT_core_Met-tRNA-FMT_N"/>
    <property type="match status" value="1"/>
</dbReference>
<dbReference type="CDD" id="cd08704">
    <property type="entry name" value="Met_tRNA_FMT_C"/>
    <property type="match status" value="1"/>
</dbReference>
<dbReference type="FunFam" id="3.10.25.10:FF:000003">
    <property type="entry name" value="Methionyl-tRNA formyltransferase"/>
    <property type="match status" value="1"/>
</dbReference>
<dbReference type="FunFam" id="3.40.50.170:FF:000004">
    <property type="entry name" value="Methionyl-tRNA formyltransferase"/>
    <property type="match status" value="1"/>
</dbReference>
<dbReference type="Gene3D" id="3.10.25.10">
    <property type="entry name" value="Formyl transferase, C-terminal domain"/>
    <property type="match status" value="1"/>
</dbReference>
<dbReference type="Gene3D" id="3.40.50.170">
    <property type="entry name" value="Formyl transferase, N-terminal domain"/>
    <property type="match status" value="1"/>
</dbReference>
<dbReference type="HAMAP" id="MF_00182">
    <property type="entry name" value="Formyl_trans"/>
    <property type="match status" value="1"/>
</dbReference>
<dbReference type="InterPro" id="IPR005794">
    <property type="entry name" value="Fmt"/>
</dbReference>
<dbReference type="InterPro" id="IPR005793">
    <property type="entry name" value="Formyl_trans_C"/>
</dbReference>
<dbReference type="InterPro" id="IPR037022">
    <property type="entry name" value="Formyl_trans_C_sf"/>
</dbReference>
<dbReference type="InterPro" id="IPR002376">
    <property type="entry name" value="Formyl_transf_N"/>
</dbReference>
<dbReference type="InterPro" id="IPR036477">
    <property type="entry name" value="Formyl_transf_N_sf"/>
</dbReference>
<dbReference type="InterPro" id="IPR011034">
    <property type="entry name" value="Formyl_transferase-like_C_sf"/>
</dbReference>
<dbReference type="InterPro" id="IPR001555">
    <property type="entry name" value="GART_AS"/>
</dbReference>
<dbReference type="InterPro" id="IPR044135">
    <property type="entry name" value="Met-tRNA-FMT_C"/>
</dbReference>
<dbReference type="InterPro" id="IPR041711">
    <property type="entry name" value="Met-tRNA-FMT_N"/>
</dbReference>
<dbReference type="NCBIfam" id="TIGR00460">
    <property type="entry name" value="fmt"/>
    <property type="match status" value="1"/>
</dbReference>
<dbReference type="PANTHER" id="PTHR11138">
    <property type="entry name" value="METHIONYL-TRNA FORMYLTRANSFERASE"/>
    <property type="match status" value="1"/>
</dbReference>
<dbReference type="PANTHER" id="PTHR11138:SF5">
    <property type="entry name" value="METHIONYL-TRNA FORMYLTRANSFERASE, MITOCHONDRIAL"/>
    <property type="match status" value="1"/>
</dbReference>
<dbReference type="Pfam" id="PF02911">
    <property type="entry name" value="Formyl_trans_C"/>
    <property type="match status" value="1"/>
</dbReference>
<dbReference type="Pfam" id="PF00551">
    <property type="entry name" value="Formyl_trans_N"/>
    <property type="match status" value="1"/>
</dbReference>
<dbReference type="SUPFAM" id="SSF50486">
    <property type="entry name" value="FMT C-terminal domain-like"/>
    <property type="match status" value="1"/>
</dbReference>
<dbReference type="SUPFAM" id="SSF53328">
    <property type="entry name" value="Formyltransferase"/>
    <property type="match status" value="1"/>
</dbReference>
<dbReference type="PROSITE" id="PS00373">
    <property type="entry name" value="GART"/>
    <property type="match status" value="1"/>
</dbReference>
<evidence type="ECO:0000255" key="1">
    <source>
        <dbReference type="HAMAP-Rule" id="MF_00182"/>
    </source>
</evidence>
<protein>
    <recommendedName>
        <fullName evidence="1">Methionyl-tRNA formyltransferase</fullName>
        <ecNumber evidence="1">2.1.2.9</ecNumber>
    </recommendedName>
</protein>
<sequence length="314" mass="34763">MIKVVFMGTPDFSVPVLRRLIEDGYEVVGVVTQPDRPVGRKKVLTPTPVKVEAEKHGIPVLQPLKIREKDEYEKVLALEPDLIVTAAFGQIVPNEILEAPKYGCINVHASLLPELRGGAPIHYAIMEGKEKTGITIMYMVEKLDAGDILTQVEVEIEERETTGSLFDKLSEAGAHLLSKTVPLLIQGKLEPIKQNEEEVTFAYNIKREQEKIDWTKTGEEVYNHIRGLNPWPVAYTTLAGQVVKVWWGEKVPITEPAEAGTIVAIEEDGFVVATSNETGVKITELQPSGKKRMSCSQFLRGTKPEIGTKLGENA</sequence>
<feature type="chain" id="PRO_1000118470" description="Methionyl-tRNA formyltransferase">
    <location>
        <begin position="1"/>
        <end position="314"/>
    </location>
</feature>
<feature type="binding site" evidence="1">
    <location>
        <begin position="110"/>
        <end position="113"/>
    </location>
    <ligand>
        <name>(6S)-5,6,7,8-tetrahydrofolate</name>
        <dbReference type="ChEBI" id="CHEBI:57453"/>
    </ligand>
</feature>